<name>IF2_STAA9</name>
<evidence type="ECO:0000250" key="1"/>
<evidence type="ECO:0000255" key="2">
    <source>
        <dbReference type="HAMAP-Rule" id="MF_00100"/>
    </source>
</evidence>
<evidence type="ECO:0000256" key="3">
    <source>
        <dbReference type="SAM" id="MobiDB-lite"/>
    </source>
</evidence>
<sequence length="705" mass="77857">MSKQRIYEYAKELNLKSKEIIDELKSMNIEVSNHMQALEDDQIKALDKKFKKEQKNDNKQSTQNNHQKSNNQNQNKGQQKDNKKNQQQNNKGNKGNKKNNRNNKKNNKNNKPQNQPAAPKEIPSKVTYQEGITVGEFADKLNVESSEIIKKLFLLGIVANINQSLNQETIELIADDYGVEVEEEVVINEEDLSIYFEDEKDDPEAIERPAVVTIMGHVDHGKTTLLDSIRHTKVTAGEAGGITQHIGAYQIENDGKKITFLDTPGHAAFTTMRARGAQVTDITILVVAADDGVMPQTIEAINHAKEAEVPIIVAVNKIDKPTSNPDRVMQELTEYGLIPEDWGGETIFVPLSALSGDGIDDLLEMIGLVAEVQELKANPKNRAVGTVIEAELDKSRGPSASLLVQNGTLNVGDAIVVGNTYGRIRAMVNDLGQRIKTAGPSTPVEITGINDVPQAGDRFVVFSDEKQARRIGESRHEASIVQQRQESKNVSLDNLFEQMKQGEMKDLNVIIKGDVQGSVEALAASLMKIDVEGVNVRIIHTAVGAINESDVTLANASNGIIIGFNVRPDSGAKRAAEAENVDMRLHRVIYNVIEEIESAMKGLLDPEFEEQVIGQAEVRQTFKVSKVGTIAGCYVTEGKITRNAGVRIIRDGIVQYEGELDTLKRFKDDAKEVAKGYECGITIENYNDLKEGDVIEAFEMVEIKR</sequence>
<dbReference type="EMBL" id="CP000703">
    <property type="protein sequence ID" value="ABQ49126.1"/>
    <property type="molecule type" value="Genomic_DNA"/>
</dbReference>
<dbReference type="RefSeq" id="WP_000043635.1">
    <property type="nucleotide sequence ID" value="NC_009487.1"/>
</dbReference>
<dbReference type="SMR" id="A5ISF3"/>
<dbReference type="KEGG" id="saj:SaurJH9_1329"/>
<dbReference type="HOGENOM" id="CLU_006301_5_1_9"/>
<dbReference type="GO" id="GO:0005829">
    <property type="term" value="C:cytosol"/>
    <property type="evidence" value="ECO:0007669"/>
    <property type="project" value="TreeGrafter"/>
</dbReference>
<dbReference type="GO" id="GO:0005525">
    <property type="term" value="F:GTP binding"/>
    <property type="evidence" value="ECO:0007669"/>
    <property type="project" value="UniProtKB-KW"/>
</dbReference>
<dbReference type="GO" id="GO:0003924">
    <property type="term" value="F:GTPase activity"/>
    <property type="evidence" value="ECO:0007669"/>
    <property type="project" value="UniProtKB-UniRule"/>
</dbReference>
<dbReference type="GO" id="GO:0003743">
    <property type="term" value="F:translation initiation factor activity"/>
    <property type="evidence" value="ECO:0007669"/>
    <property type="project" value="UniProtKB-UniRule"/>
</dbReference>
<dbReference type="CDD" id="cd01887">
    <property type="entry name" value="IF2_eIF5B"/>
    <property type="match status" value="1"/>
</dbReference>
<dbReference type="CDD" id="cd03702">
    <property type="entry name" value="IF2_mtIF2_II"/>
    <property type="match status" value="1"/>
</dbReference>
<dbReference type="CDD" id="cd03692">
    <property type="entry name" value="mtIF2_IVc"/>
    <property type="match status" value="1"/>
</dbReference>
<dbReference type="FunFam" id="1.10.10.2480:FF:000002">
    <property type="entry name" value="Translation initiation factor IF-2"/>
    <property type="match status" value="1"/>
</dbReference>
<dbReference type="FunFam" id="2.40.30.10:FF:000007">
    <property type="entry name" value="Translation initiation factor IF-2"/>
    <property type="match status" value="1"/>
</dbReference>
<dbReference type="FunFam" id="2.40.30.10:FF:000008">
    <property type="entry name" value="Translation initiation factor IF-2"/>
    <property type="match status" value="1"/>
</dbReference>
<dbReference type="FunFam" id="3.40.50.10050:FF:000001">
    <property type="entry name" value="Translation initiation factor IF-2"/>
    <property type="match status" value="1"/>
</dbReference>
<dbReference type="FunFam" id="3.40.50.300:FF:000019">
    <property type="entry name" value="Translation initiation factor IF-2"/>
    <property type="match status" value="1"/>
</dbReference>
<dbReference type="Gene3D" id="1.10.10.2480">
    <property type="match status" value="1"/>
</dbReference>
<dbReference type="Gene3D" id="3.40.50.300">
    <property type="entry name" value="P-loop containing nucleotide triphosphate hydrolases"/>
    <property type="match status" value="1"/>
</dbReference>
<dbReference type="Gene3D" id="2.40.30.10">
    <property type="entry name" value="Translation factors"/>
    <property type="match status" value="2"/>
</dbReference>
<dbReference type="Gene3D" id="3.40.50.10050">
    <property type="entry name" value="Translation initiation factor IF- 2, domain 3"/>
    <property type="match status" value="1"/>
</dbReference>
<dbReference type="HAMAP" id="MF_00100_B">
    <property type="entry name" value="IF_2_B"/>
    <property type="match status" value="1"/>
</dbReference>
<dbReference type="InterPro" id="IPR053905">
    <property type="entry name" value="EF-G-like_DII"/>
</dbReference>
<dbReference type="InterPro" id="IPR044145">
    <property type="entry name" value="IF2_II"/>
</dbReference>
<dbReference type="InterPro" id="IPR006847">
    <property type="entry name" value="IF2_N"/>
</dbReference>
<dbReference type="InterPro" id="IPR027417">
    <property type="entry name" value="P-loop_NTPase"/>
</dbReference>
<dbReference type="InterPro" id="IPR005225">
    <property type="entry name" value="Small_GTP-bd"/>
</dbReference>
<dbReference type="InterPro" id="IPR000795">
    <property type="entry name" value="T_Tr_GTP-bd_dom"/>
</dbReference>
<dbReference type="InterPro" id="IPR000178">
    <property type="entry name" value="TF_IF2_bacterial-like"/>
</dbReference>
<dbReference type="InterPro" id="IPR015760">
    <property type="entry name" value="TIF_IF2"/>
</dbReference>
<dbReference type="InterPro" id="IPR023115">
    <property type="entry name" value="TIF_IF2_dom3"/>
</dbReference>
<dbReference type="InterPro" id="IPR036925">
    <property type="entry name" value="TIF_IF2_dom3_sf"/>
</dbReference>
<dbReference type="InterPro" id="IPR009000">
    <property type="entry name" value="Transl_B-barrel_sf"/>
</dbReference>
<dbReference type="NCBIfam" id="TIGR00487">
    <property type="entry name" value="IF-2"/>
    <property type="match status" value="1"/>
</dbReference>
<dbReference type="NCBIfam" id="TIGR00231">
    <property type="entry name" value="small_GTP"/>
    <property type="match status" value="1"/>
</dbReference>
<dbReference type="PANTHER" id="PTHR43381:SF5">
    <property type="entry name" value="TR-TYPE G DOMAIN-CONTAINING PROTEIN"/>
    <property type="match status" value="1"/>
</dbReference>
<dbReference type="PANTHER" id="PTHR43381">
    <property type="entry name" value="TRANSLATION INITIATION FACTOR IF-2-RELATED"/>
    <property type="match status" value="1"/>
</dbReference>
<dbReference type="Pfam" id="PF22042">
    <property type="entry name" value="EF-G_D2"/>
    <property type="match status" value="1"/>
</dbReference>
<dbReference type="Pfam" id="PF00009">
    <property type="entry name" value="GTP_EFTU"/>
    <property type="match status" value="1"/>
</dbReference>
<dbReference type="Pfam" id="PF11987">
    <property type="entry name" value="IF-2"/>
    <property type="match status" value="1"/>
</dbReference>
<dbReference type="Pfam" id="PF04760">
    <property type="entry name" value="IF2_N"/>
    <property type="match status" value="2"/>
</dbReference>
<dbReference type="SUPFAM" id="SSF52156">
    <property type="entry name" value="Initiation factor IF2/eIF5b, domain 3"/>
    <property type="match status" value="1"/>
</dbReference>
<dbReference type="SUPFAM" id="SSF52540">
    <property type="entry name" value="P-loop containing nucleoside triphosphate hydrolases"/>
    <property type="match status" value="1"/>
</dbReference>
<dbReference type="SUPFAM" id="SSF50447">
    <property type="entry name" value="Translation proteins"/>
    <property type="match status" value="2"/>
</dbReference>
<dbReference type="PROSITE" id="PS51722">
    <property type="entry name" value="G_TR_2"/>
    <property type="match status" value="1"/>
</dbReference>
<dbReference type="PROSITE" id="PS01176">
    <property type="entry name" value="IF2"/>
    <property type="match status" value="1"/>
</dbReference>
<accession>A5ISF3</accession>
<keyword id="KW-0963">Cytoplasm</keyword>
<keyword id="KW-0342">GTP-binding</keyword>
<keyword id="KW-0396">Initiation factor</keyword>
<keyword id="KW-0547">Nucleotide-binding</keyword>
<keyword id="KW-0648">Protein biosynthesis</keyword>
<comment type="function">
    <text evidence="2">One of the essential components for the initiation of protein synthesis. Protects formylmethionyl-tRNA from spontaneous hydrolysis and promotes its binding to the 30S ribosomal subunits. Also involved in the hydrolysis of GTP during the formation of the 70S ribosomal complex.</text>
</comment>
<comment type="subcellular location">
    <subcellularLocation>
        <location evidence="2">Cytoplasm</location>
    </subcellularLocation>
</comment>
<comment type="similarity">
    <text evidence="2">Belongs to the TRAFAC class translation factor GTPase superfamily. Classic translation factor GTPase family. IF-2 subfamily.</text>
</comment>
<feature type="chain" id="PRO_1000075623" description="Translation initiation factor IF-2">
    <location>
        <begin position="1"/>
        <end position="705"/>
    </location>
</feature>
<feature type="domain" description="tr-type G">
    <location>
        <begin position="207"/>
        <end position="376"/>
    </location>
</feature>
<feature type="region of interest" description="Disordered" evidence="3">
    <location>
        <begin position="40"/>
        <end position="124"/>
    </location>
</feature>
<feature type="region of interest" description="G1" evidence="1">
    <location>
        <begin position="216"/>
        <end position="223"/>
    </location>
</feature>
<feature type="region of interest" description="G2" evidence="1">
    <location>
        <begin position="241"/>
        <end position="245"/>
    </location>
</feature>
<feature type="region of interest" description="G3" evidence="1">
    <location>
        <begin position="262"/>
        <end position="265"/>
    </location>
</feature>
<feature type="region of interest" description="G4" evidence="1">
    <location>
        <begin position="316"/>
        <end position="319"/>
    </location>
</feature>
<feature type="region of interest" description="G5" evidence="1">
    <location>
        <begin position="352"/>
        <end position="354"/>
    </location>
</feature>
<feature type="compositionally biased region" description="Basic and acidic residues" evidence="3">
    <location>
        <begin position="41"/>
        <end position="58"/>
    </location>
</feature>
<feature type="compositionally biased region" description="Low complexity" evidence="3">
    <location>
        <begin position="59"/>
        <end position="77"/>
    </location>
</feature>
<feature type="compositionally biased region" description="Basic residues" evidence="3">
    <location>
        <begin position="94"/>
        <end position="108"/>
    </location>
</feature>
<feature type="binding site" evidence="2">
    <location>
        <begin position="216"/>
        <end position="223"/>
    </location>
    <ligand>
        <name>GTP</name>
        <dbReference type="ChEBI" id="CHEBI:37565"/>
    </ligand>
</feature>
<feature type="binding site" evidence="2">
    <location>
        <begin position="262"/>
        <end position="266"/>
    </location>
    <ligand>
        <name>GTP</name>
        <dbReference type="ChEBI" id="CHEBI:37565"/>
    </ligand>
</feature>
<feature type="binding site" evidence="2">
    <location>
        <begin position="316"/>
        <end position="319"/>
    </location>
    <ligand>
        <name>GTP</name>
        <dbReference type="ChEBI" id="CHEBI:37565"/>
    </ligand>
</feature>
<reference key="1">
    <citation type="submission" date="2007-05" db="EMBL/GenBank/DDBJ databases">
        <title>Complete sequence of chromosome of Staphylococcus aureus subsp. aureus JH9.</title>
        <authorList>
            <consortium name="US DOE Joint Genome Institute"/>
            <person name="Copeland A."/>
            <person name="Lucas S."/>
            <person name="Lapidus A."/>
            <person name="Barry K."/>
            <person name="Detter J.C."/>
            <person name="Glavina del Rio T."/>
            <person name="Hammon N."/>
            <person name="Israni S."/>
            <person name="Pitluck S."/>
            <person name="Chain P."/>
            <person name="Malfatti S."/>
            <person name="Shin M."/>
            <person name="Vergez L."/>
            <person name="Schmutz J."/>
            <person name="Larimer F."/>
            <person name="Land M."/>
            <person name="Hauser L."/>
            <person name="Kyrpides N."/>
            <person name="Kim E."/>
            <person name="Tomasz A."/>
            <person name="Richardson P."/>
        </authorList>
    </citation>
    <scope>NUCLEOTIDE SEQUENCE [LARGE SCALE GENOMIC DNA]</scope>
    <source>
        <strain>JH9</strain>
    </source>
</reference>
<organism>
    <name type="scientific">Staphylococcus aureus (strain JH9)</name>
    <dbReference type="NCBI Taxonomy" id="359786"/>
    <lineage>
        <taxon>Bacteria</taxon>
        <taxon>Bacillati</taxon>
        <taxon>Bacillota</taxon>
        <taxon>Bacilli</taxon>
        <taxon>Bacillales</taxon>
        <taxon>Staphylococcaceae</taxon>
        <taxon>Staphylococcus</taxon>
    </lineage>
</organism>
<protein>
    <recommendedName>
        <fullName evidence="2">Translation initiation factor IF-2</fullName>
    </recommendedName>
</protein>
<gene>
    <name evidence="2" type="primary">infB</name>
    <name type="ordered locus">SaurJH9_1329</name>
</gene>
<proteinExistence type="inferred from homology"/>